<sequence>MGKLFGTDGVRGLANKKLTAPLAMKLGAAAARVLVSKEEVGGRRPTAVVGRDPRVSGEMLTAALSAGMASQGVDVLDVGVIPTPAVAFLTDDFGADMGVMISASHNPMPDNGIKFFAAGGRKLQDDVEDEIEATMLELPETGPTGAAIGRILDESSDALERYLAHVGTAINHPLDGIRVVVDCANGAASTAAPEAYRQAGADVVAIHSRPNSFNINDGVGSTHIEVLQKAVLEHQADLGLAHDGDADRCLAVDSEGNVVDGDQIMAILAVAMKENGELKQNTLVATVMSNLGMKLAMRANGIKVLETQVGDRYVLAELLASDLSLGGEQSGHVIISEHATTGDGTLTGLTLMARMAQTGKPLSELASVMTVLPQTLINVPVADKSVIADDERVVEAIAKAEEDLGDAGRVLLRPSGTEELFRVMVEAADPGTARRIAGKLAAVVAEV</sequence>
<gene>
    <name evidence="1" type="primary">glmM</name>
    <name type="ordered locus">jk1743</name>
</gene>
<organism>
    <name type="scientific">Corynebacterium jeikeium (strain K411)</name>
    <dbReference type="NCBI Taxonomy" id="306537"/>
    <lineage>
        <taxon>Bacteria</taxon>
        <taxon>Bacillati</taxon>
        <taxon>Actinomycetota</taxon>
        <taxon>Actinomycetes</taxon>
        <taxon>Mycobacteriales</taxon>
        <taxon>Corynebacteriaceae</taxon>
        <taxon>Corynebacterium</taxon>
    </lineage>
</organism>
<proteinExistence type="inferred from homology"/>
<accession>Q4JTD7</accession>
<keyword id="KW-0413">Isomerase</keyword>
<keyword id="KW-0460">Magnesium</keyword>
<keyword id="KW-0479">Metal-binding</keyword>
<keyword id="KW-0597">Phosphoprotein</keyword>
<keyword id="KW-1185">Reference proteome</keyword>
<feature type="chain" id="PRO_0000147880" description="Phosphoglucosamine mutase">
    <location>
        <begin position="1"/>
        <end position="447"/>
    </location>
</feature>
<feature type="active site" description="Phosphoserine intermediate" evidence="1">
    <location>
        <position position="104"/>
    </location>
</feature>
<feature type="binding site" description="via phosphate group" evidence="1">
    <location>
        <position position="104"/>
    </location>
    <ligand>
        <name>Mg(2+)</name>
        <dbReference type="ChEBI" id="CHEBI:18420"/>
    </ligand>
</feature>
<feature type="binding site" evidence="1">
    <location>
        <position position="243"/>
    </location>
    <ligand>
        <name>Mg(2+)</name>
        <dbReference type="ChEBI" id="CHEBI:18420"/>
    </ligand>
</feature>
<feature type="binding site" evidence="1">
    <location>
        <position position="245"/>
    </location>
    <ligand>
        <name>Mg(2+)</name>
        <dbReference type="ChEBI" id="CHEBI:18420"/>
    </ligand>
</feature>
<feature type="binding site" evidence="1">
    <location>
        <position position="247"/>
    </location>
    <ligand>
        <name>Mg(2+)</name>
        <dbReference type="ChEBI" id="CHEBI:18420"/>
    </ligand>
</feature>
<feature type="modified residue" description="Phosphoserine" evidence="1">
    <location>
        <position position="104"/>
    </location>
</feature>
<comment type="function">
    <text evidence="1">Catalyzes the conversion of glucosamine-6-phosphate to glucosamine-1-phosphate.</text>
</comment>
<comment type="catalytic activity">
    <reaction evidence="1">
        <text>alpha-D-glucosamine 1-phosphate = D-glucosamine 6-phosphate</text>
        <dbReference type="Rhea" id="RHEA:23424"/>
        <dbReference type="ChEBI" id="CHEBI:58516"/>
        <dbReference type="ChEBI" id="CHEBI:58725"/>
        <dbReference type="EC" id="5.4.2.10"/>
    </reaction>
</comment>
<comment type="cofactor">
    <cofactor evidence="1">
        <name>Mg(2+)</name>
        <dbReference type="ChEBI" id="CHEBI:18420"/>
    </cofactor>
    <text evidence="1">Binds 1 Mg(2+) ion per subunit.</text>
</comment>
<comment type="PTM">
    <text evidence="1">Activated by phosphorylation.</text>
</comment>
<comment type="similarity">
    <text evidence="1">Belongs to the phosphohexose mutase family.</text>
</comment>
<evidence type="ECO:0000255" key="1">
    <source>
        <dbReference type="HAMAP-Rule" id="MF_01554"/>
    </source>
</evidence>
<reference key="1">
    <citation type="journal article" date="2005" name="J. Bacteriol.">
        <title>Complete genome sequence and analysis of the multiresistant nosocomial pathogen Corynebacterium jeikeium K411, a lipid-requiring bacterium of the human skin flora.</title>
        <authorList>
            <person name="Tauch A."/>
            <person name="Kaiser O."/>
            <person name="Hain T."/>
            <person name="Goesmann A."/>
            <person name="Weisshaar B."/>
            <person name="Albersmeier A."/>
            <person name="Bekel T."/>
            <person name="Bischoff N."/>
            <person name="Brune I."/>
            <person name="Chakraborty T."/>
            <person name="Kalinowski J."/>
            <person name="Meyer F."/>
            <person name="Rupp O."/>
            <person name="Schneiker S."/>
            <person name="Viehoever P."/>
            <person name="Puehler A."/>
        </authorList>
    </citation>
    <scope>NUCLEOTIDE SEQUENCE [LARGE SCALE GENOMIC DNA]</scope>
    <source>
        <strain>K411</strain>
    </source>
</reference>
<protein>
    <recommendedName>
        <fullName evidence="1">Phosphoglucosamine mutase</fullName>
        <ecNumber evidence="1">5.4.2.10</ecNumber>
    </recommendedName>
</protein>
<name>GLMM_CORJK</name>
<dbReference type="EC" id="5.4.2.10" evidence="1"/>
<dbReference type="EMBL" id="CR931997">
    <property type="protein sequence ID" value="CAI37920.1"/>
    <property type="molecule type" value="Genomic_DNA"/>
</dbReference>
<dbReference type="RefSeq" id="WP_005291839.1">
    <property type="nucleotide sequence ID" value="NC_007164.1"/>
</dbReference>
<dbReference type="SMR" id="Q4JTD7"/>
<dbReference type="STRING" id="306537.jk1743"/>
<dbReference type="GeneID" id="92739380"/>
<dbReference type="KEGG" id="cjk:jk1743"/>
<dbReference type="eggNOG" id="COG1109">
    <property type="taxonomic scope" value="Bacteria"/>
</dbReference>
<dbReference type="HOGENOM" id="CLU_016950_7_0_11"/>
<dbReference type="OrthoDB" id="9803322at2"/>
<dbReference type="Proteomes" id="UP000000545">
    <property type="component" value="Chromosome"/>
</dbReference>
<dbReference type="GO" id="GO:0005829">
    <property type="term" value="C:cytosol"/>
    <property type="evidence" value="ECO:0007669"/>
    <property type="project" value="TreeGrafter"/>
</dbReference>
<dbReference type="GO" id="GO:0000287">
    <property type="term" value="F:magnesium ion binding"/>
    <property type="evidence" value="ECO:0007669"/>
    <property type="project" value="UniProtKB-UniRule"/>
</dbReference>
<dbReference type="GO" id="GO:0008966">
    <property type="term" value="F:phosphoglucosamine mutase activity"/>
    <property type="evidence" value="ECO:0007669"/>
    <property type="project" value="UniProtKB-UniRule"/>
</dbReference>
<dbReference type="GO" id="GO:0004615">
    <property type="term" value="F:phosphomannomutase activity"/>
    <property type="evidence" value="ECO:0007669"/>
    <property type="project" value="TreeGrafter"/>
</dbReference>
<dbReference type="GO" id="GO:0005975">
    <property type="term" value="P:carbohydrate metabolic process"/>
    <property type="evidence" value="ECO:0007669"/>
    <property type="project" value="InterPro"/>
</dbReference>
<dbReference type="GO" id="GO:0009252">
    <property type="term" value="P:peptidoglycan biosynthetic process"/>
    <property type="evidence" value="ECO:0007669"/>
    <property type="project" value="TreeGrafter"/>
</dbReference>
<dbReference type="GO" id="GO:0006048">
    <property type="term" value="P:UDP-N-acetylglucosamine biosynthetic process"/>
    <property type="evidence" value="ECO:0007669"/>
    <property type="project" value="TreeGrafter"/>
</dbReference>
<dbReference type="CDD" id="cd05802">
    <property type="entry name" value="GlmM"/>
    <property type="match status" value="1"/>
</dbReference>
<dbReference type="FunFam" id="3.30.310.50:FF:000001">
    <property type="entry name" value="Phosphoglucosamine mutase"/>
    <property type="match status" value="1"/>
</dbReference>
<dbReference type="FunFam" id="3.40.120.10:FF:000001">
    <property type="entry name" value="Phosphoglucosamine mutase"/>
    <property type="match status" value="1"/>
</dbReference>
<dbReference type="FunFam" id="3.40.120.10:FF:000002">
    <property type="entry name" value="Phosphoglucosamine mutase"/>
    <property type="match status" value="1"/>
</dbReference>
<dbReference type="Gene3D" id="3.40.120.10">
    <property type="entry name" value="Alpha-D-Glucose-1,6-Bisphosphate, subunit A, domain 3"/>
    <property type="match status" value="3"/>
</dbReference>
<dbReference type="Gene3D" id="3.30.310.50">
    <property type="entry name" value="Alpha-D-phosphohexomutase, C-terminal domain"/>
    <property type="match status" value="1"/>
</dbReference>
<dbReference type="HAMAP" id="MF_01554_B">
    <property type="entry name" value="GlmM_B"/>
    <property type="match status" value="1"/>
</dbReference>
<dbReference type="InterPro" id="IPR005844">
    <property type="entry name" value="A-D-PHexomutase_a/b/a-I"/>
</dbReference>
<dbReference type="InterPro" id="IPR016055">
    <property type="entry name" value="A-D-PHexomutase_a/b/a-I/II/III"/>
</dbReference>
<dbReference type="InterPro" id="IPR005845">
    <property type="entry name" value="A-D-PHexomutase_a/b/a-II"/>
</dbReference>
<dbReference type="InterPro" id="IPR005846">
    <property type="entry name" value="A-D-PHexomutase_a/b/a-III"/>
</dbReference>
<dbReference type="InterPro" id="IPR005843">
    <property type="entry name" value="A-D-PHexomutase_C"/>
</dbReference>
<dbReference type="InterPro" id="IPR036900">
    <property type="entry name" value="A-D-PHexomutase_C_sf"/>
</dbReference>
<dbReference type="InterPro" id="IPR016066">
    <property type="entry name" value="A-D-PHexomutase_CS"/>
</dbReference>
<dbReference type="InterPro" id="IPR005841">
    <property type="entry name" value="Alpha-D-phosphohexomutase_SF"/>
</dbReference>
<dbReference type="InterPro" id="IPR006352">
    <property type="entry name" value="GlmM_bact"/>
</dbReference>
<dbReference type="InterPro" id="IPR050060">
    <property type="entry name" value="Phosphoglucosamine_mutase"/>
</dbReference>
<dbReference type="NCBIfam" id="TIGR01455">
    <property type="entry name" value="glmM"/>
    <property type="match status" value="1"/>
</dbReference>
<dbReference type="PANTHER" id="PTHR42946:SF1">
    <property type="entry name" value="PHOSPHOGLUCOMUTASE (ALPHA-D-GLUCOSE-1,6-BISPHOSPHATE-DEPENDENT)"/>
    <property type="match status" value="1"/>
</dbReference>
<dbReference type="PANTHER" id="PTHR42946">
    <property type="entry name" value="PHOSPHOHEXOSE MUTASE"/>
    <property type="match status" value="1"/>
</dbReference>
<dbReference type="Pfam" id="PF02878">
    <property type="entry name" value="PGM_PMM_I"/>
    <property type="match status" value="1"/>
</dbReference>
<dbReference type="Pfam" id="PF02879">
    <property type="entry name" value="PGM_PMM_II"/>
    <property type="match status" value="1"/>
</dbReference>
<dbReference type="Pfam" id="PF02880">
    <property type="entry name" value="PGM_PMM_III"/>
    <property type="match status" value="1"/>
</dbReference>
<dbReference type="Pfam" id="PF00408">
    <property type="entry name" value="PGM_PMM_IV"/>
    <property type="match status" value="1"/>
</dbReference>
<dbReference type="PRINTS" id="PR00509">
    <property type="entry name" value="PGMPMM"/>
</dbReference>
<dbReference type="SUPFAM" id="SSF55957">
    <property type="entry name" value="Phosphoglucomutase, C-terminal domain"/>
    <property type="match status" value="1"/>
</dbReference>
<dbReference type="SUPFAM" id="SSF53738">
    <property type="entry name" value="Phosphoglucomutase, first 3 domains"/>
    <property type="match status" value="3"/>
</dbReference>
<dbReference type="PROSITE" id="PS00710">
    <property type="entry name" value="PGM_PMM"/>
    <property type="match status" value="1"/>
</dbReference>